<protein>
    <recommendedName>
        <fullName evidence="1">Glucosamine-6-phosphate deaminase</fullName>
        <ecNumber evidence="1">3.5.99.6</ecNumber>
    </recommendedName>
    <alternativeName>
        <fullName evidence="1">GlcN6P deaminase</fullName>
        <shortName evidence="1">GNPDA</shortName>
    </alternativeName>
    <alternativeName>
        <fullName evidence="1">Glucosamine-6-phosphate isomerase</fullName>
    </alternativeName>
</protein>
<reference key="1">
    <citation type="journal article" date="2006" name="Proc. Natl. Acad. Sci. U.S.A.">
        <title>Comparative genomics of the lactic acid bacteria.</title>
        <authorList>
            <person name="Makarova K.S."/>
            <person name="Slesarev A."/>
            <person name="Wolf Y.I."/>
            <person name="Sorokin A."/>
            <person name="Mirkin B."/>
            <person name="Koonin E.V."/>
            <person name="Pavlov A."/>
            <person name="Pavlova N."/>
            <person name="Karamychev V."/>
            <person name="Polouchine N."/>
            <person name="Shakhova V."/>
            <person name="Grigoriev I."/>
            <person name="Lou Y."/>
            <person name="Rohksar D."/>
            <person name="Lucas S."/>
            <person name="Huang K."/>
            <person name="Goodstein D.M."/>
            <person name="Hawkins T."/>
            <person name="Plengvidhya V."/>
            <person name="Welker D."/>
            <person name="Hughes J."/>
            <person name="Goh Y."/>
            <person name="Benson A."/>
            <person name="Baldwin K."/>
            <person name="Lee J.-H."/>
            <person name="Diaz-Muniz I."/>
            <person name="Dosti B."/>
            <person name="Smeianov V."/>
            <person name="Wechter W."/>
            <person name="Barabote R."/>
            <person name="Lorca G."/>
            <person name="Altermann E."/>
            <person name="Barrangou R."/>
            <person name="Ganesan B."/>
            <person name="Xie Y."/>
            <person name="Rawsthorne H."/>
            <person name="Tamir D."/>
            <person name="Parker C."/>
            <person name="Breidt F."/>
            <person name="Broadbent J.R."/>
            <person name="Hutkins R."/>
            <person name="O'Sullivan D."/>
            <person name="Steele J."/>
            <person name="Unlu G."/>
            <person name="Saier M.H. Jr."/>
            <person name="Klaenhammer T."/>
            <person name="Richardson P."/>
            <person name="Kozyavkin S."/>
            <person name="Weimer B.C."/>
            <person name="Mills D.A."/>
        </authorList>
    </citation>
    <scope>NUCLEOTIDE SEQUENCE [LARGE SCALE GENOMIC DNA]</scope>
    <source>
        <strain>ATCC BAA-365 / Lb-18</strain>
    </source>
</reference>
<name>NAGB_LACDB</name>
<proteinExistence type="inferred from homology"/>
<feature type="chain" id="PRO_1000066993" description="Glucosamine-6-phosphate deaminase">
    <location>
        <begin position="1"/>
        <end position="234"/>
    </location>
</feature>
<feature type="active site" description="Proton acceptor; for enolization step" evidence="1">
    <location>
        <position position="62"/>
    </location>
</feature>
<feature type="active site" description="For ring-opening step" evidence="1">
    <location>
        <position position="128"/>
    </location>
</feature>
<feature type="active site" description="Proton acceptor; for ring-opening step" evidence="1">
    <location>
        <position position="130"/>
    </location>
</feature>
<feature type="active site" description="For ring-opening step" evidence="1">
    <location>
        <position position="135"/>
    </location>
</feature>
<evidence type="ECO:0000255" key="1">
    <source>
        <dbReference type="HAMAP-Rule" id="MF_01241"/>
    </source>
</evidence>
<accession>Q047I3</accession>
<sequence length="234" mass="25383">MKIIVVKNASELGKQAFDLLAKAVDEGAKTLGLATGSSPVELYQEIVASQLDFSQMTSVNLDEYVGLSPENPQSYHYFMNQHLFQYKPFKRSYLPDGQTKDIQAECGRYNQILAENPVDLQVLGIGQNGHIAFNEPGTPFDSVTHEVALTESTIKANARFFNSIDEVPKSAICMGIANIMAAKEIVLLAKGESKAKAIKDMVEGPVTTDVPASVLQKHPNVTVIADQAAASLLK</sequence>
<dbReference type="EC" id="3.5.99.6" evidence="1"/>
<dbReference type="EMBL" id="CP000412">
    <property type="protein sequence ID" value="ABJ59389.1"/>
    <property type="molecule type" value="Genomic_DNA"/>
</dbReference>
<dbReference type="RefSeq" id="WP_011544358.1">
    <property type="nucleotide sequence ID" value="NC_008529.1"/>
</dbReference>
<dbReference type="SMR" id="Q047I3"/>
<dbReference type="KEGG" id="lbu:LBUL_2010"/>
<dbReference type="HOGENOM" id="CLU_049611_1_0_9"/>
<dbReference type="BioCyc" id="LDEL321956:LBUL_RS09500-MONOMER"/>
<dbReference type="UniPathway" id="UPA00629">
    <property type="reaction ID" value="UER00684"/>
</dbReference>
<dbReference type="GO" id="GO:0005737">
    <property type="term" value="C:cytoplasm"/>
    <property type="evidence" value="ECO:0007669"/>
    <property type="project" value="TreeGrafter"/>
</dbReference>
<dbReference type="GO" id="GO:0004342">
    <property type="term" value="F:glucosamine-6-phosphate deaminase activity"/>
    <property type="evidence" value="ECO:0007669"/>
    <property type="project" value="UniProtKB-UniRule"/>
</dbReference>
<dbReference type="GO" id="GO:0042802">
    <property type="term" value="F:identical protein binding"/>
    <property type="evidence" value="ECO:0007669"/>
    <property type="project" value="TreeGrafter"/>
</dbReference>
<dbReference type="GO" id="GO:0005975">
    <property type="term" value="P:carbohydrate metabolic process"/>
    <property type="evidence" value="ECO:0007669"/>
    <property type="project" value="InterPro"/>
</dbReference>
<dbReference type="GO" id="GO:0006043">
    <property type="term" value="P:glucosamine catabolic process"/>
    <property type="evidence" value="ECO:0007669"/>
    <property type="project" value="TreeGrafter"/>
</dbReference>
<dbReference type="GO" id="GO:0006046">
    <property type="term" value="P:N-acetylglucosamine catabolic process"/>
    <property type="evidence" value="ECO:0007669"/>
    <property type="project" value="TreeGrafter"/>
</dbReference>
<dbReference type="GO" id="GO:0019262">
    <property type="term" value="P:N-acetylneuraminate catabolic process"/>
    <property type="evidence" value="ECO:0007669"/>
    <property type="project" value="UniProtKB-UniRule"/>
</dbReference>
<dbReference type="CDD" id="cd01399">
    <property type="entry name" value="GlcN6P_deaminase"/>
    <property type="match status" value="1"/>
</dbReference>
<dbReference type="FunFam" id="3.40.50.1360:FF:000003">
    <property type="entry name" value="Glucosamine-6-phosphate deaminase"/>
    <property type="match status" value="1"/>
</dbReference>
<dbReference type="Gene3D" id="3.40.50.1360">
    <property type="match status" value="1"/>
</dbReference>
<dbReference type="HAMAP" id="MF_01241">
    <property type="entry name" value="GlcN6P_deamin"/>
    <property type="match status" value="1"/>
</dbReference>
<dbReference type="InterPro" id="IPR006148">
    <property type="entry name" value="Glc/Gal-6P_isomerase"/>
</dbReference>
<dbReference type="InterPro" id="IPR004547">
    <property type="entry name" value="Glucosamine6P_isomerase"/>
</dbReference>
<dbReference type="InterPro" id="IPR018321">
    <property type="entry name" value="Glucosamine6P_isomerase_CS"/>
</dbReference>
<dbReference type="InterPro" id="IPR037171">
    <property type="entry name" value="NagB/RpiA_transferase-like"/>
</dbReference>
<dbReference type="NCBIfam" id="TIGR00502">
    <property type="entry name" value="nagB"/>
    <property type="match status" value="1"/>
</dbReference>
<dbReference type="PANTHER" id="PTHR11280">
    <property type="entry name" value="GLUCOSAMINE-6-PHOSPHATE ISOMERASE"/>
    <property type="match status" value="1"/>
</dbReference>
<dbReference type="PANTHER" id="PTHR11280:SF5">
    <property type="entry name" value="GLUCOSAMINE-6-PHOSPHATE ISOMERASE"/>
    <property type="match status" value="1"/>
</dbReference>
<dbReference type="Pfam" id="PF01182">
    <property type="entry name" value="Glucosamine_iso"/>
    <property type="match status" value="1"/>
</dbReference>
<dbReference type="SUPFAM" id="SSF100950">
    <property type="entry name" value="NagB/RpiA/CoA transferase-like"/>
    <property type="match status" value="1"/>
</dbReference>
<dbReference type="PROSITE" id="PS01161">
    <property type="entry name" value="GLC_GALNAC_ISOMERASE"/>
    <property type="match status" value="1"/>
</dbReference>
<keyword id="KW-0119">Carbohydrate metabolism</keyword>
<keyword id="KW-0378">Hydrolase</keyword>
<gene>
    <name evidence="1" type="primary">nagB</name>
    <name type="ordered locus">LBUL_2010</name>
</gene>
<organism>
    <name type="scientific">Lactobacillus delbrueckii subsp. bulgaricus (strain ATCC BAA-365 / Lb-18)</name>
    <dbReference type="NCBI Taxonomy" id="321956"/>
    <lineage>
        <taxon>Bacteria</taxon>
        <taxon>Bacillati</taxon>
        <taxon>Bacillota</taxon>
        <taxon>Bacilli</taxon>
        <taxon>Lactobacillales</taxon>
        <taxon>Lactobacillaceae</taxon>
        <taxon>Lactobacillus</taxon>
    </lineage>
</organism>
<comment type="function">
    <text evidence="1">Catalyzes the reversible isomerization-deamination of glucosamine 6-phosphate (GlcN6P) to form fructose 6-phosphate (Fru6P) and ammonium ion.</text>
</comment>
<comment type="catalytic activity">
    <reaction evidence="1">
        <text>alpha-D-glucosamine 6-phosphate + H2O = beta-D-fructose 6-phosphate + NH4(+)</text>
        <dbReference type="Rhea" id="RHEA:12172"/>
        <dbReference type="ChEBI" id="CHEBI:15377"/>
        <dbReference type="ChEBI" id="CHEBI:28938"/>
        <dbReference type="ChEBI" id="CHEBI:57634"/>
        <dbReference type="ChEBI" id="CHEBI:75989"/>
        <dbReference type="EC" id="3.5.99.6"/>
    </reaction>
</comment>
<comment type="pathway">
    <text evidence="1">Amino-sugar metabolism; N-acetylneuraminate degradation; D-fructose 6-phosphate from N-acetylneuraminate: step 5/5.</text>
</comment>
<comment type="similarity">
    <text evidence="1">Belongs to the glucosamine/galactosamine-6-phosphate isomerase family. NagB subfamily.</text>
</comment>